<feature type="chain" id="PRO_0000235230" description="Type 2 phosphatidylinositol 4,5-bisphosphate 4-phosphatase">
    <location>
        <begin position="1"/>
        <end position="257"/>
    </location>
</feature>
<feature type="transmembrane region" description="Helical" evidence="4">
    <location>
        <begin position="192"/>
        <end position="212"/>
    </location>
</feature>
<feature type="transmembrane region" description="Helical" evidence="4">
    <location>
        <begin position="227"/>
        <end position="247"/>
    </location>
</feature>
<feature type="region of interest" description="Disordered" evidence="5">
    <location>
        <begin position="1"/>
        <end position="43"/>
    </location>
</feature>
<feature type="short sequence motif" description="CX5R motif">
    <location>
        <begin position="107"/>
        <end position="113"/>
    </location>
</feature>
<feature type="compositionally biased region" description="Basic and acidic residues" evidence="5">
    <location>
        <begin position="1"/>
        <end position="10"/>
    </location>
</feature>
<feature type="compositionally biased region" description="Polar residues" evidence="5">
    <location>
        <begin position="13"/>
        <end position="23"/>
    </location>
</feature>
<feature type="active site" evidence="1">
    <location>
        <position position="107"/>
    </location>
</feature>
<feature type="modified residue" description="Phosphothreonine" evidence="6">
    <location>
        <position position="22"/>
    </location>
</feature>
<feature type="modified residue" description="Phosphoserine" evidence="3">
    <location>
        <position position="33"/>
    </location>
</feature>
<accession>Q4V888</accession>
<evidence type="ECO:0000250" key="1"/>
<evidence type="ECO:0000250" key="2">
    <source>
        <dbReference type="UniProtKB" id="Q8N4L2"/>
    </source>
</evidence>
<evidence type="ECO:0000250" key="3">
    <source>
        <dbReference type="UniProtKB" id="Q9CZX7"/>
    </source>
</evidence>
<evidence type="ECO:0000255" key="4"/>
<evidence type="ECO:0000256" key="5">
    <source>
        <dbReference type="SAM" id="MobiDB-lite"/>
    </source>
</evidence>
<evidence type="ECO:0007744" key="6">
    <source>
    </source>
</evidence>
<protein>
    <recommendedName>
        <fullName>Type 2 phosphatidylinositol 4,5-bisphosphate 4-phosphatase</fullName>
        <shortName>Type 2 PtdIns-4,5-P2 4-Ptase</shortName>
        <ecNumber evidence="2">3.1.3.78</ecNumber>
    </recommendedName>
    <alternativeName>
        <fullName>PtdIns-4,5-P2 4-Ptase II</fullName>
    </alternativeName>
    <alternativeName>
        <fullName>Transmembrane protein 55A</fullName>
    </alternativeName>
</protein>
<name>PP4P2_RAT</name>
<proteinExistence type="evidence at protein level"/>
<dbReference type="EC" id="3.1.3.78" evidence="2"/>
<dbReference type="EMBL" id="BC097492">
    <property type="protein sequence ID" value="AAH97492.1"/>
    <property type="molecule type" value="mRNA"/>
</dbReference>
<dbReference type="RefSeq" id="NP_001020071.1">
    <property type="nucleotide sequence ID" value="NM_001024900.1"/>
</dbReference>
<dbReference type="SMR" id="Q4V888"/>
<dbReference type="FunCoup" id="Q4V888">
    <property type="interactions" value="3246"/>
</dbReference>
<dbReference type="STRING" id="10116.ENSRNOP00000009375"/>
<dbReference type="GlyGen" id="Q4V888">
    <property type="glycosylation" value="2 sites"/>
</dbReference>
<dbReference type="iPTMnet" id="Q4V888"/>
<dbReference type="PhosphoSitePlus" id="Q4V888"/>
<dbReference type="SwissPalm" id="Q4V888"/>
<dbReference type="jPOST" id="Q4V888"/>
<dbReference type="PaxDb" id="10116-ENSRNOP00000009375"/>
<dbReference type="Ensembl" id="ENSRNOT00000009375.8">
    <property type="protein sequence ID" value="ENSRNOP00000009375.4"/>
    <property type="gene ID" value="ENSRNOG00000006697.8"/>
</dbReference>
<dbReference type="GeneID" id="362490"/>
<dbReference type="KEGG" id="rno:362490"/>
<dbReference type="UCSC" id="RGD:1306225">
    <property type="organism name" value="rat"/>
</dbReference>
<dbReference type="AGR" id="RGD:1306225"/>
<dbReference type="CTD" id="55529"/>
<dbReference type="RGD" id="1306225">
    <property type="gene designation" value="Pip4p2"/>
</dbReference>
<dbReference type="eggNOG" id="KOG4684">
    <property type="taxonomic scope" value="Eukaryota"/>
</dbReference>
<dbReference type="GeneTree" id="ENSGT00390000003680"/>
<dbReference type="HOGENOM" id="CLU_087485_0_0_1"/>
<dbReference type="InParanoid" id="Q4V888"/>
<dbReference type="OMA" id="ATYISWA"/>
<dbReference type="OrthoDB" id="9939933at2759"/>
<dbReference type="PhylomeDB" id="Q4V888"/>
<dbReference type="TreeFam" id="TF316367"/>
<dbReference type="PRO" id="PR:Q4V888"/>
<dbReference type="Proteomes" id="UP000002494">
    <property type="component" value="Chromosome 5"/>
</dbReference>
<dbReference type="Bgee" id="ENSRNOG00000006697">
    <property type="expression patterns" value="Expressed in quadriceps femoris and 19 other cell types or tissues"/>
</dbReference>
<dbReference type="GO" id="GO:0031902">
    <property type="term" value="C:late endosome membrane"/>
    <property type="evidence" value="ECO:0000250"/>
    <property type="project" value="UniProtKB"/>
</dbReference>
<dbReference type="GO" id="GO:0005765">
    <property type="term" value="C:lysosomal membrane"/>
    <property type="evidence" value="ECO:0000266"/>
    <property type="project" value="RGD"/>
</dbReference>
<dbReference type="GO" id="GO:0030670">
    <property type="term" value="C:phagocytic vesicle membrane"/>
    <property type="evidence" value="ECO:0000250"/>
    <property type="project" value="UniProtKB"/>
</dbReference>
<dbReference type="GO" id="GO:0005886">
    <property type="term" value="C:plasma membrane"/>
    <property type="evidence" value="ECO:0000250"/>
    <property type="project" value="UniProtKB"/>
</dbReference>
<dbReference type="GO" id="GO:0034597">
    <property type="term" value="F:phosphatidylinositol-4,5-bisphosphate 4-phosphatase activity"/>
    <property type="evidence" value="ECO:0000266"/>
    <property type="project" value="RGD"/>
</dbReference>
<dbReference type="GO" id="GO:0050765">
    <property type="term" value="P:negative regulation of phagocytosis"/>
    <property type="evidence" value="ECO:0000250"/>
    <property type="project" value="UniProtKB"/>
</dbReference>
<dbReference type="GO" id="GO:0046856">
    <property type="term" value="P:phosphatidylinositol dephosphorylation"/>
    <property type="evidence" value="ECO:0000250"/>
    <property type="project" value="UniProtKB"/>
</dbReference>
<dbReference type="InterPro" id="IPR019178">
    <property type="entry name" value="PtdIns-P2-Ptase"/>
</dbReference>
<dbReference type="PANTHER" id="PTHR21014">
    <property type="entry name" value="PHOSPHATIDYLINOSITOL-4,5-BISPHOSPHATE 4-PHOSPHATASE"/>
    <property type="match status" value="1"/>
</dbReference>
<dbReference type="PANTHER" id="PTHR21014:SF5">
    <property type="entry name" value="TYPE 2 PHOSPHATIDYLINOSITOL 4,5-BISPHOSPHATE 4-PHOSPHATASE"/>
    <property type="match status" value="1"/>
</dbReference>
<dbReference type="Pfam" id="PF09788">
    <property type="entry name" value="Tmemb_55A"/>
    <property type="match status" value="1"/>
</dbReference>
<sequence length="257" mass="28024">MAADGVDERSPLLSASHSGNVTPTAPPYLQESSPRAELPPPYTAIASPGTSGIPVINCRVCQSLINLDGKLHQHVVKCTVCNEATPIKTPPTGKKYVRCPCNCLLICKDTSRRIGCPRPNCRRIINLGPIMLISEEQPAQPALPVQPEGTRVVCGHCGNTFLWMELRFNTLAKCPHCKKISSVGSALPRRRCCAYVTIGMICIFIGVGLTVGTQDFSRRFHATYVSWAIAYLLGLICLIRACYWGAIRVSYPEHGFA</sequence>
<keyword id="KW-1003">Cell membrane</keyword>
<keyword id="KW-0968">Cytoplasmic vesicle</keyword>
<keyword id="KW-0967">Endosome</keyword>
<keyword id="KW-0378">Hydrolase</keyword>
<keyword id="KW-0443">Lipid metabolism</keyword>
<keyword id="KW-0458">Lysosome</keyword>
<keyword id="KW-0472">Membrane</keyword>
<keyword id="KW-0597">Phosphoprotein</keyword>
<keyword id="KW-1185">Reference proteome</keyword>
<keyword id="KW-0812">Transmembrane</keyword>
<keyword id="KW-1133">Transmembrane helix</keyword>
<organism>
    <name type="scientific">Rattus norvegicus</name>
    <name type="common">Rat</name>
    <dbReference type="NCBI Taxonomy" id="10116"/>
    <lineage>
        <taxon>Eukaryota</taxon>
        <taxon>Metazoa</taxon>
        <taxon>Chordata</taxon>
        <taxon>Craniata</taxon>
        <taxon>Vertebrata</taxon>
        <taxon>Euteleostomi</taxon>
        <taxon>Mammalia</taxon>
        <taxon>Eutheria</taxon>
        <taxon>Euarchontoglires</taxon>
        <taxon>Glires</taxon>
        <taxon>Rodentia</taxon>
        <taxon>Myomorpha</taxon>
        <taxon>Muroidea</taxon>
        <taxon>Muridae</taxon>
        <taxon>Murinae</taxon>
        <taxon>Rattus</taxon>
    </lineage>
</organism>
<comment type="function">
    <text evidence="2 3">Catalyzes the hydrolysis of phosphatidylinositol-4,5-bisphosphate (PtdIns-4,5-P2) to phosphatidylinositol-4-phosphate (PtdIns-4-P) (By similarity). Does not hydrolyze phosphatidylinositol 3,4,5-trisphosphate, phosphatidylinositol 3,4-bisphosphate, inositol 3,5-bisphosphate, inositol 3,4-bisphosphate, phosphatidylinositol 5-monophosphate, phosphatidylinositol 4-monophosphate and phosphatidylinositol 3-monophosphate (By similarity). Negatively regulates the phagocytosis of large particles by reducing phagosomal phosphatidylinositol 4,5-bisphosphate accumulation during cup formation (By similarity).</text>
</comment>
<comment type="catalytic activity">
    <reaction evidence="2">
        <text>a 1,2-diacyl-sn-glycero-3-phospho-(1D-myo-inositol-4,5-bisphosphate) + H2O = a 1,2-diacyl-sn-glycero-3-phospho-(1D-myo-inositol-5-phosphate) + phosphate</text>
        <dbReference type="Rhea" id="RHEA:25674"/>
        <dbReference type="ChEBI" id="CHEBI:15377"/>
        <dbReference type="ChEBI" id="CHEBI:43474"/>
        <dbReference type="ChEBI" id="CHEBI:57795"/>
        <dbReference type="ChEBI" id="CHEBI:58456"/>
        <dbReference type="EC" id="3.1.3.78"/>
    </reaction>
</comment>
<comment type="subcellular location">
    <subcellularLocation>
        <location evidence="2">Late endosome membrane</location>
        <topology evidence="4">Multi-pass membrane protein</topology>
    </subcellularLocation>
    <subcellularLocation>
        <location evidence="2">Lysosome membrane</location>
        <topology evidence="4">Multi-pass membrane protein</topology>
    </subcellularLocation>
    <subcellularLocation>
        <location evidence="3">Cytoplasmic vesicle</location>
        <location evidence="3">Phagosome membrane</location>
        <topology evidence="4">Multi-pass membrane protein</topology>
    </subcellularLocation>
    <subcellularLocation>
        <location evidence="3">Cell membrane</location>
        <topology evidence="4">Multi-pass membrane protein</topology>
    </subcellularLocation>
</comment>
<gene>
    <name type="primary">Pip4p2</name>
    <name type="synonym">Tmem55a</name>
</gene>
<reference key="1">
    <citation type="journal article" date="2004" name="Genome Res.">
        <title>The status, quality, and expansion of the NIH full-length cDNA project: the Mammalian Gene Collection (MGC).</title>
        <authorList>
            <consortium name="The MGC Project Team"/>
        </authorList>
    </citation>
    <scope>NUCLEOTIDE SEQUENCE [LARGE SCALE MRNA]</scope>
    <source>
        <tissue>Placenta</tissue>
    </source>
</reference>
<reference key="2">
    <citation type="journal article" date="2012" name="Nat. Commun.">
        <title>Quantitative maps of protein phosphorylation sites across 14 different rat organs and tissues.</title>
        <authorList>
            <person name="Lundby A."/>
            <person name="Secher A."/>
            <person name="Lage K."/>
            <person name="Nordsborg N.B."/>
            <person name="Dmytriyev A."/>
            <person name="Lundby C."/>
            <person name="Olsen J.V."/>
        </authorList>
    </citation>
    <scope>PHOSPHORYLATION [LARGE SCALE ANALYSIS] AT THR-22</scope>
    <scope>IDENTIFICATION BY MASS SPECTROMETRY [LARGE SCALE ANALYSIS]</scope>
</reference>